<gene>
    <name type="primary">G</name>
</gene>
<evidence type="ECO:0000250" key="1">
    <source>
        <dbReference type="UniProtKB" id="P03423"/>
    </source>
</evidence>
<evidence type="ECO:0000250" key="2">
    <source>
        <dbReference type="UniProtKB" id="P20895"/>
    </source>
</evidence>
<evidence type="ECO:0000255" key="3"/>
<evidence type="ECO:0000256" key="4">
    <source>
        <dbReference type="SAM" id="MobiDB-lite"/>
    </source>
</evidence>
<evidence type="ECO:0000269" key="5">
    <source>
    </source>
</evidence>
<evidence type="ECO:0000305" key="6"/>
<proteinExistence type="evidence at protein level"/>
<reference key="1">
    <citation type="journal article" date="1987" name="Proc. Natl. Acad. Sci. U.S.A.">
        <title>The G glycoprotein of human respiratory syncytial viruses of subgroups A and B: extensive sequence divergence between antigenically related proteins.</title>
        <authorList>
            <person name="Johnson P.R."/>
            <person name="Spriggs M.K."/>
            <person name="Olmsted R.A."/>
            <person name="Collins P.L."/>
        </authorList>
    </citation>
    <scope>NUCLEOTIDE SEQUENCE [GENOMIC RNA]</scope>
</reference>
<reference key="2">
    <citation type="journal article" date="1999" name="J. Virol.">
        <title>Identification of a linear heparin binding domain for human respiratory syncytial virus attachment glycoprotein G.</title>
        <authorList>
            <person name="Feldman S.A."/>
            <person name="Hendry R.M."/>
            <person name="Beeler J.A."/>
        </authorList>
    </citation>
    <scope>DOMAIN (ISOFORM MEMBRANE-BOUND GLYCOPROTEIN G)</scope>
    <scope>FUNCTION (MEMBRANE-BOUND GLYCOPROTEIN G)</scope>
    <scope>INTERACTION WITH HOST HEPARATE SULFATE (ISOFORM MEMBRANE-BOUND GLYCOPROTEIN G)</scope>
</reference>
<feature type="chain" id="PRO_0000142857" description="Major surface glycoprotein G">
    <location>
        <begin position="1"/>
        <end position="292"/>
    </location>
</feature>
<feature type="chain" id="PRO_0000451326" description="Mature secreted glycoprotein G">
    <location>
        <begin position="66"/>
        <end position="292"/>
    </location>
</feature>
<feature type="topological domain" description="Cytoplasmic" evidence="3">
    <location>
        <begin position="1"/>
        <end position="37"/>
    </location>
</feature>
<feature type="transmembrane region" description="Helical" evidence="3">
    <location>
        <begin position="38"/>
        <end position="66"/>
    </location>
</feature>
<feature type="topological domain" description="Extracellular" evidence="3">
    <location>
        <begin position="67"/>
        <end position="292"/>
    </location>
</feature>
<feature type="region of interest" description="Disordered" evidence="4">
    <location>
        <begin position="92"/>
        <end position="161"/>
    </location>
</feature>
<feature type="region of interest" description="Binding to host heparan sulfate" evidence="5">
    <location>
        <begin position="187"/>
        <end position="198"/>
    </location>
</feature>
<feature type="region of interest" description="Disordered" evidence="4">
    <location>
        <begin position="189"/>
        <end position="292"/>
    </location>
</feature>
<feature type="compositionally biased region" description="Polar residues" evidence="4">
    <location>
        <begin position="99"/>
        <end position="142"/>
    </location>
</feature>
<feature type="compositionally biased region" description="Basic residues" evidence="4">
    <location>
        <begin position="148"/>
        <end position="157"/>
    </location>
</feature>
<feature type="compositionally biased region" description="Low complexity" evidence="4">
    <location>
        <begin position="200"/>
        <end position="210"/>
    </location>
</feature>
<feature type="compositionally biased region" description="Basic and acidic residues" evidence="4">
    <location>
        <begin position="212"/>
        <end position="227"/>
    </location>
</feature>
<feature type="compositionally biased region" description="Polar residues" evidence="4">
    <location>
        <begin position="245"/>
        <end position="292"/>
    </location>
</feature>
<feature type="site" description="Cleavage" evidence="1">
    <location>
        <begin position="65"/>
        <end position="66"/>
    </location>
</feature>
<feature type="glycosylation site" description="O-linked (GalNAc...) threonine; by host" evidence="1">
    <location>
        <position position="70"/>
    </location>
</feature>
<feature type="glycosylation site" description="O-linked (GalNAc...) threonine; by host" evidence="1">
    <location>
        <position position="72"/>
    </location>
</feature>
<feature type="glycosylation site" description="N-linked (GlcNAc...) asparagine; by host" evidence="3">
    <location>
        <position position="81"/>
    </location>
</feature>
<feature type="glycosylation site" description="N-linked (GlcNAc...) asparagine; by host" evidence="3">
    <location>
        <position position="86"/>
    </location>
</feature>
<feature type="glycosylation site" description="O-linked (GalNAc...) threonine; by host" evidence="1">
    <location>
        <position position="92"/>
    </location>
</feature>
<feature type="glycosylation site" description="N-linked (GlcNAc...) asparagine; by host" evidence="3">
    <location>
        <position position="100"/>
    </location>
</feature>
<feature type="glycosylation site" description="O-linked (GalNAc...) threonine; by host" evidence="3">
    <location>
        <position position="113"/>
    </location>
</feature>
<feature type="glycosylation site" description="O-linked (GalNAc...) threonine; by host" evidence="3">
    <location>
        <position position="138"/>
    </location>
</feature>
<feature type="glycosylation site" description="O-linked (GalNAc...) threonine; by host" evidence="3">
    <location>
        <position position="139"/>
    </location>
</feature>
<feature type="glycosylation site" description="O-linked (GalNAc...) threonine; by host" evidence="3">
    <location>
        <position position="141"/>
    </location>
</feature>
<feature type="glycosylation site" description="O-linked (GalNAc...) threonine; by host" evidence="3">
    <location>
        <position position="199"/>
    </location>
</feature>
<feature type="glycosylation site" description="O-linked (GalNAc...) threonine; by host" evidence="3">
    <location>
        <position position="203"/>
    </location>
</feature>
<feature type="glycosylation site" description="O-linked (GalNAc...) threonine; by host" evidence="3">
    <location>
        <position position="236"/>
    </location>
</feature>
<feature type="glycosylation site" description="O-linked (GalNAc...) threonine; by host" evidence="3">
    <location>
        <position position="254"/>
    </location>
</feature>
<feature type="glycosylation site" description="O-linked (GlcNAc...) serine; by host" evidence="3">
    <location>
        <position position="271"/>
    </location>
</feature>
<feature type="glycosylation site" description="O-linked (GalNAc...) serine; by host" evidence="3">
    <location>
        <position position="276"/>
    </location>
</feature>
<feature type="glycosylation site" description="O-linked (GalNAc...) serine; by host" evidence="3">
    <location>
        <position position="284"/>
    </location>
</feature>
<feature type="disulfide bond" evidence="1">
    <location>
        <begin position="173"/>
        <end position="186"/>
    </location>
</feature>
<feature type="disulfide bond" evidence="1">
    <location>
        <begin position="176"/>
        <end position="182"/>
    </location>
</feature>
<feature type="splice variant" id="VSP_036525" description="In isoform Secreted glycoprotein G." evidence="1">
    <location>
        <begin position="1"/>
        <end position="47"/>
    </location>
</feature>
<sequence>MSKHKNQRTARTLEKTWDTLNHLIVISSCLYRLNLKSIAQIALSVLAMIISTSLIIAAIIFIISANHKVTLTTVTVQTIKNHTEKNISTYLTQVPPERVNSSKQPTTTSPIHTNSATISPNTKSETHHTTAQTKGRITTSTQTNKPSTKSRSKNPPKKPKDDYHFEVFNFVPCSICGNNQLCKSICKTIPSNKPKKKPTIKPTNKPTTKTTNKRDPKTPAKMPKKEIITNPAKKPTLKTTERDTSISQSTVLDTITPKYTIQQQSLHSTTSENTPSSTQIPTASEPSTLNPN</sequence>
<dbReference type="EMBL" id="M17213">
    <property type="protein sequence ID" value="AAA47412.1"/>
    <property type="molecule type" value="Genomic_RNA"/>
</dbReference>
<dbReference type="PIR" id="B32703">
    <property type="entry name" value="MGNZ18"/>
</dbReference>
<dbReference type="SMR" id="P20896"/>
<dbReference type="GlyCosmos" id="P20896">
    <property type="glycosylation" value="17 sites, No reported glycans"/>
</dbReference>
<dbReference type="GO" id="GO:0005576">
    <property type="term" value="C:extracellular region"/>
    <property type="evidence" value="ECO:0007669"/>
    <property type="project" value="UniProtKB-SubCell"/>
</dbReference>
<dbReference type="GO" id="GO:0020002">
    <property type="term" value="C:host cell plasma membrane"/>
    <property type="evidence" value="ECO:0007669"/>
    <property type="project" value="UniProtKB-SubCell"/>
</dbReference>
<dbReference type="GO" id="GO:0016020">
    <property type="term" value="C:membrane"/>
    <property type="evidence" value="ECO:0007669"/>
    <property type="project" value="UniProtKB-KW"/>
</dbReference>
<dbReference type="GO" id="GO:0055036">
    <property type="term" value="C:virion membrane"/>
    <property type="evidence" value="ECO:0007669"/>
    <property type="project" value="UniProtKB-SubCell"/>
</dbReference>
<dbReference type="GO" id="GO:0046718">
    <property type="term" value="P:symbiont entry into host cell"/>
    <property type="evidence" value="ECO:0007669"/>
    <property type="project" value="UniProtKB-KW"/>
</dbReference>
<dbReference type="GO" id="GO:0019062">
    <property type="term" value="P:virion attachment to host cell"/>
    <property type="evidence" value="ECO:0007669"/>
    <property type="project" value="UniProtKB-KW"/>
</dbReference>
<dbReference type="InterPro" id="IPR000925">
    <property type="entry name" value="G_prot"/>
</dbReference>
<dbReference type="Pfam" id="PF00802">
    <property type="entry name" value="Glycoprotein_G"/>
    <property type="match status" value="1"/>
</dbReference>
<protein>
    <recommendedName>
        <fullName>Major surface glycoprotein G</fullName>
    </recommendedName>
    <alternativeName>
        <fullName>Attachment glycoprotein G</fullName>
    </alternativeName>
    <alternativeName>
        <fullName>Membrane-bound glycoprotein</fullName>
        <shortName>mG</shortName>
    </alternativeName>
    <component>
        <recommendedName>
            <fullName evidence="2">Mature secreted glycoprotein G</fullName>
            <shortName evidence="2">Mature sG</shortName>
        </recommendedName>
    </component>
</protein>
<accession>P20896</accession>
<keyword id="KW-0024">Alternative initiation</keyword>
<keyword id="KW-1015">Disulfide bond</keyword>
<keyword id="KW-0325">Glycoprotein</keyword>
<keyword id="KW-1032">Host cell membrane</keyword>
<keyword id="KW-1043">Host membrane</keyword>
<keyword id="KW-0945">Host-virus interaction</keyword>
<keyword id="KW-0472">Membrane</keyword>
<keyword id="KW-0964">Secreted</keyword>
<keyword id="KW-0812">Transmembrane</keyword>
<keyword id="KW-1133">Transmembrane helix</keyword>
<keyword id="KW-1161">Viral attachment to host cell</keyword>
<keyword id="KW-0899">Viral immunoevasion</keyword>
<keyword id="KW-0946">Virion</keyword>
<keyword id="KW-1160">Virus entry into host cell</keyword>
<organismHost>
    <name type="scientific">Homo sapiens</name>
    <name type="common">Human</name>
    <dbReference type="NCBI Taxonomy" id="9606"/>
</organismHost>
<organism>
    <name type="scientific">Human respiratory syncytial virus B (strain 18537)</name>
    <dbReference type="NCBI Taxonomy" id="11251"/>
    <lineage>
        <taxon>Viruses</taxon>
        <taxon>Riboviria</taxon>
        <taxon>Orthornavirae</taxon>
        <taxon>Negarnaviricota</taxon>
        <taxon>Haploviricotina</taxon>
        <taxon>Monjiviricetes</taxon>
        <taxon>Mononegavirales</taxon>
        <taxon>Pneumoviridae</taxon>
        <taxon>Orthopneumovirus</taxon>
        <taxon>Orthopneumovirus hominis</taxon>
    </lineage>
</organism>
<comment type="function">
    <molecule>Isoform Membrane-bound glycoprotein G</molecule>
    <text evidence="1">Attaches the virion to the host cell membrane by interacting with heparan sulfate, initiating the infection. Interacts with host CX3CR1, the receptor for the CX3C chemokine fractalkine, to modulate the immune response and facilitate infection. Unlike the other paramyxovirus attachment proteins, lacks both neuraminidase and hemagglutinating activities.</text>
</comment>
<comment type="function">
    <molecule>Isoform Secreted glycoprotein G</molecule>
    <text evidence="1">Helps the virus escape antibody-dependent restriction of replication by acting as an antigen decoy and by modulating the activity of leukocytes bearing Fc-gamma receptors.</text>
</comment>
<comment type="subunit">
    <molecule>Isoform Membrane-bound glycoprotein G</molecule>
    <text evidence="1">Homooligomer. Interacts (via N-terminus) with protein M. Part of a complex composed of F1, F2 and G glycoproteins. Interacts with protein SH. Interacts with host heparate sulfate; this interaction probably participates in the viral attachment to the host cell. Interacts with host CX3CR1; this interaction plays an important role in viral entry. Interacts with the host lectins CD209/DC-SIGN and CD209L/L-SIGN on dendritic cells; these interactions stimulate the phosphorylation of MAPK3/ERK1 and MAPK1/ERK2, which inhibits dendritic cell activation and could participate in the limited immunity against RSV reinfection.</text>
</comment>
<comment type="subcellular location">
    <molecule>Isoform Membrane-bound glycoprotein G</molecule>
    <subcellularLocation>
        <location evidence="1">Virion membrane</location>
        <topology evidence="1">Single-pass type II membrane protein</topology>
    </subcellularLocation>
    <subcellularLocation>
        <location evidence="1">Host cell membrane</location>
        <topology evidence="1">Single-pass type II membrane protein</topology>
    </subcellularLocation>
</comment>
<comment type="subcellular location">
    <molecule>Isoform Secreted glycoprotein G</molecule>
    <subcellularLocation>
        <location evidence="2">Secreted</location>
    </subcellularLocation>
    <text evidence="2">The protein is shed from infected cells before the appearance of progeny virus. The initiation at the downstream methionine removes a portion of the transmembrane domain. The remaining hydrophobic portion of the sG protein is essential for translocating it into the lumen of the ER during translation and would likely maintain its membrane association until a proteolytic event releases the mature sG protein into the medium.</text>
</comment>
<comment type="alternative products">
    <event type="alternative initiation"/>
    <isoform>
        <id>P20896-1</id>
        <name>Membrane-bound glycoprotein G</name>
        <sequence type="displayed"/>
    </isoform>
    <isoform>
        <id>P20896-2</id>
        <name>Secreted glycoprotein G</name>
        <sequence type="described" ref="VSP_036525"/>
    </isoform>
</comment>
<comment type="domain">
    <molecule>Isoform Membrane-bound glycoprotein G</molecule>
    <text evidence="1">Contains a linear heparin binding domain essential for virus attachment to the host.</text>
</comment>
<comment type="PTM">
    <molecule>Isoform Secreted glycoprotein G</molecule>
    <text evidence="2">Cleaved to give rise to the mature sG protein which lacks the transmembrane domain.</text>
</comment>
<comment type="PTM">
    <molecule>Isoform Membrane-bound glycoprotein G</molecule>
    <text evidence="1">N- and O-glycosylated. May carry 30-40 separate O-linked carbohydrate chains distributed among the 91 serine and threonine residues.</text>
</comment>
<comment type="PTM">
    <molecule>Isoform Membrane-bound glycoprotein G</molecule>
    <text evidence="1">Palmitoylated.</text>
</comment>
<comment type="similarity">
    <text evidence="6">Belongs to the pneumoviruses glycoprotein G family.</text>
</comment>
<name>GLYC_HRSV1</name>